<proteinExistence type="evidence at transcript level"/>
<organismHost>
    <name type="scientific">Embergeria</name>
    <dbReference type="NCBI Taxonomy" id="43191"/>
</organismHost>
<organismHost>
    <name type="scientific">Lactuca sativa</name>
    <name type="common">Garden lettuce</name>
    <dbReference type="NCBI Taxonomy" id="4236"/>
</organismHost>
<organismHost>
    <name type="scientific">Reichardia tingitana</name>
    <dbReference type="NCBI Taxonomy" id="43208"/>
</organismHost>
<organismHost>
    <name type="scientific">Sonchus hydrophilus</name>
    <dbReference type="NCBI Taxonomy" id="255580"/>
</organismHost>
<organismHost>
    <name type="scientific">Sonchus oleraceus</name>
    <name type="common">Common sowthistle</name>
    <dbReference type="NCBI Taxonomy" id="50207"/>
</organismHost>
<reference key="1">
    <citation type="journal article" date="2006" name="Virus Res.">
        <title>Completion of the genome sequence of Lettuce necrotic yellows virus, type species of the genus Cytorhabdovirus.</title>
        <authorList>
            <person name="Dietzgen R.G."/>
            <person name="Callaghan B."/>
            <person name="Wetzel T."/>
            <person name="Dale J.L."/>
        </authorList>
    </citation>
    <scope>NUCLEOTIDE SEQUENCE [GENOMIC RNA / MRNA]</scope>
</reference>
<keyword id="KW-0945">Host-virus interaction</keyword>
<keyword id="KW-1185">Reference proteome</keyword>
<keyword id="KW-0813">Transport</keyword>
<keyword id="KW-0916">Viral movement protein</keyword>
<dbReference type="EMBL" id="AF209034">
    <property type="protein sequence ID" value="AAG32647.2"/>
    <property type="molecule type" value="mRNA"/>
</dbReference>
<dbReference type="EMBL" id="AJ867584">
    <property type="protein sequence ID" value="CAI30423.2"/>
    <property type="molecule type" value="Genomic_RNA"/>
</dbReference>
<dbReference type="RefSeq" id="YP_425089.1">
    <property type="nucleotide sequence ID" value="NC_007642.1"/>
</dbReference>
<dbReference type="GeneID" id="3844360"/>
<dbReference type="KEGG" id="vg:3844360"/>
<dbReference type="Proteomes" id="UP000008592">
    <property type="component" value="Segment"/>
</dbReference>
<dbReference type="GO" id="GO:0046740">
    <property type="term" value="P:transport of virus in host, cell to cell"/>
    <property type="evidence" value="ECO:0007669"/>
    <property type="project" value="UniProtKB-KW"/>
</dbReference>
<dbReference type="InterPro" id="IPR028919">
    <property type="entry name" value="Viral_movement"/>
</dbReference>
<dbReference type="Pfam" id="PF01107">
    <property type="entry name" value="MP"/>
    <property type="match status" value="1"/>
</dbReference>
<accession>Q9E7N8</accession>
<name>MVP_LNYV3</name>
<gene>
    <name type="primary">4b</name>
</gene>
<evidence type="ECO:0000250" key="1"/>
<feature type="chain" id="PRO_0000299212" description="Probable movement protein 4b">
    <location>
        <begin position="1"/>
        <end position="302"/>
    </location>
</feature>
<protein>
    <recommendedName>
        <fullName>Probable movement protein 4b</fullName>
        <shortName>MP</shortName>
    </recommendedName>
    <alternativeName>
        <fullName>Cell-to-cell transport protein</fullName>
    </alternativeName>
    <alternativeName>
        <fullName>Protein 4b</fullName>
    </alternativeName>
</protein>
<sequence>MLDVNSVRKHVLKTGSLTSAVGTGTIYQGTYNRYAKKKELNIIVTSSGSNNVIMRQVPLFDKEDLDAMKSDTTSNKYLHIGCITVSIEPLLHQRYMKNFGKTIAGNCAIIDSTFRKVDQSIISLHKYDLSRGRADYVSYPNHCLSLTDPMIQKRLSVLLGIKGIDVEPGVELFSICIGYIVSSVNTLHPVSQLGIQGVAINGTESADIDELGAEDIDQLSLSYNDSKIISLPSDEDIYYRSKGSLFSKGRTIKRRTMRTRVPDPEEPIKLTKSQSSRIEHGKVMRLLKNKQIREKIERGMIA</sequence>
<comment type="function">
    <text evidence="1">Transports viral genome to neighboring plant cells directly through plasmosdesmata, without any budding. The movement protein allows efficient cell to cell propagation, by bypassing the host cell wall barrier (By similarity).</text>
</comment>
<organism>
    <name type="scientific">Lettuce necrotic yellows virus (isolate 318)</name>
    <name type="common">LNYV</name>
    <dbReference type="NCBI Taxonomy" id="928304"/>
    <lineage>
        <taxon>Viruses</taxon>
        <taxon>Riboviria</taxon>
        <taxon>Orthornavirae</taxon>
        <taxon>Negarnaviricota</taxon>
        <taxon>Haploviricotina</taxon>
        <taxon>Monjiviricetes</taxon>
        <taxon>Mononegavirales</taxon>
        <taxon>Rhabdoviridae</taxon>
        <taxon>Betarhabdovirinae</taxon>
        <taxon>Cytorhabdovirus</taxon>
        <taxon>Cytorhabdovirus lactucanecante</taxon>
    </lineage>
</organism>